<comment type="function">
    <text evidence="1">Binds the 23S rRNA.</text>
</comment>
<comment type="cofactor">
    <cofactor evidence="1">
        <name>Zn(2+)</name>
        <dbReference type="ChEBI" id="CHEBI:29105"/>
    </cofactor>
    <text evidence="1">Binds 1 zinc ion per subunit.</text>
</comment>
<comment type="subunit">
    <text evidence="1">Part of the 50S ribosomal subunit.</text>
</comment>
<comment type="similarity">
    <text evidence="1">Belongs to the bacterial ribosomal protein bL31 family. Type A subfamily.</text>
</comment>
<dbReference type="EMBL" id="CU928160">
    <property type="protein sequence ID" value="CAR00912.1"/>
    <property type="molecule type" value="Genomic_DNA"/>
</dbReference>
<dbReference type="RefSeq" id="WP_000710769.1">
    <property type="nucleotide sequence ID" value="NC_011741.1"/>
</dbReference>
<dbReference type="SMR" id="B7M6Y7"/>
<dbReference type="GeneID" id="93777962"/>
<dbReference type="KEGG" id="ecr:ECIAI1_4141"/>
<dbReference type="HOGENOM" id="CLU_114306_4_3_6"/>
<dbReference type="GO" id="GO:1990904">
    <property type="term" value="C:ribonucleoprotein complex"/>
    <property type="evidence" value="ECO:0007669"/>
    <property type="project" value="UniProtKB-KW"/>
</dbReference>
<dbReference type="GO" id="GO:0005840">
    <property type="term" value="C:ribosome"/>
    <property type="evidence" value="ECO:0007669"/>
    <property type="project" value="UniProtKB-KW"/>
</dbReference>
<dbReference type="GO" id="GO:0046872">
    <property type="term" value="F:metal ion binding"/>
    <property type="evidence" value="ECO:0007669"/>
    <property type="project" value="UniProtKB-KW"/>
</dbReference>
<dbReference type="GO" id="GO:0019843">
    <property type="term" value="F:rRNA binding"/>
    <property type="evidence" value="ECO:0007669"/>
    <property type="project" value="UniProtKB-KW"/>
</dbReference>
<dbReference type="GO" id="GO:0003735">
    <property type="term" value="F:structural constituent of ribosome"/>
    <property type="evidence" value="ECO:0007669"/>
    <property type="project" value="InterPro"/>
</dbReference>
<dbReference type="GO" id="GO:0006412">
    <property type="term" value="P:translation"/>
    <property type="evidence" value="ECO:0007669"/>
    <property type="project" value="UniProtKB-UniRule"/>
</dbReference>
<dbReference type="FunFam" id="4.10.830.30:FF:000001">
    <property type="entry name" value="50S ribosomal protein L31"/>
    <property type="match status" value="1"/>
</dbReference>
<dbReference type="Gene3D" id="4.10.830.30">
    <property type="entry name" value="Ribosomal protein L31"/>
    <property type="match status" value="1"/>
</dbReference>
<dbReference type="HAMAP" id="MF_00501">
    <property type="entry name" value="Ribosomal_bL31_1"/>
    <property type="match status" value="1"/>
</dbReference>
<dbReference type="InterPro" id="IPR034704">
    <property type="entry name" value="Ribosomal_bL28/bL31-like_sf"/>
</dbReference>
<dbReference type="InterPro" id="IPR002150">
    <property type="entry name" value="Ribosomal_bL31"/>
</dbReference>
<dbReference type="InterPro" id="IPR027491">
    <property type="entry name" value="Ribosomal_bL31_A"/>
</dbReference>
<dbReference type="InterPro" id="IPR042105">
    <property type="entry name" value="Ribosomal_bL31_sf"/>
</dbReference>
<dbReference type="NCBIfam" id="TIGR00105">
    <property type="entry name" value="L31"/>
    <property type="match status" value="1"/>
</dbReference>
<dbReference type="NCBIfam" id="NF000612">
    <property type="entry name" value="PRK00019.1"/>
    <property type="match status" value="1"/>
</dbReference>
<dbReference type="NCBIfam" id="NF001809">
    <property type="entry name" value="PRK00528.1"/>
    <property type="match status" value="1"/>
</dbReference>
<dbReference type="PANTHER" id="PTHR33280">
    <property type="entry name" value="50S RIBOSOMAL PROTEIN L31, CHLOROPLASTIC"/>
    <property type="match status" value="1"/>
</dbReference>
<dbReference type="PANTHER" id="PTHR33280:SF6">
    <property type="entry name" value="LARGE RIBOSOMAL SUBUNIT PROTEIN BL31A"/>
    <property type="match status" value="1"/>
</dbReference>
<dbReference type="Pfam" id="PF01197">
    <property type="entry name" value="Ribosomal_L31"/>
    <property type="match status" value="1"/>
</dbReference>
<dbReference type="PRINTS" id="PR01249">
    <property type="entry name" value="RIBOSOMALL31"/>
</dbReference>
<dbReference type="SUPFAM" id="SSF143800">
    <property type="entry name" value="L28p-like"/>
    <property type="match status" value="1"/>
</dbReference>
<dbReference type="PROSITE" id="PS01143">
    <property type="entry name" value="RIBOSOMAL_L31"/>
    <property type="match status" value="1"/>
</dbReference>
<keyword id="KW-0007">Acetylation</keyword>
<keyword id="KW-0479">Metal-binding</keyword>
<keyword id="KW-0687">Ribonucleoprotein</keyword>
<keyword id="KW-0689">Ribosomal protein</keyword>
<keyword id="KW-0694">RNA-binding</keyword>
<keyword id="KW-0699">rRNA-binding</keyword>
<keyword id="KW-0862">Zinc</keyword>
<accession>B7M6Y7</accession>
<name>RL31_ECO8A</name>
<evidence type="ECO:0000255" key="1">
    <source>
        <dbReference type="HAMAP-Rule" id="MF_00501"/>
    </source>
</evidence>
<evidence type="ECO:0000305" key="2"/>
<gene>
    <name evidence="1" type="primary">rpmE</name>
    <name type="ordered locus">ECIAI1_4141</name>
</gene>
<protein>
    <recommendedName>
        <fullName evidence="1">Large ribosomal subunit protein bL31</fullName>
    </recommendedName>
    <alternativeName>
        <fullName evidence="2">50S ribosomal protein L31</fullName>
    </alternativeName>
</protein>
<organism>
    <name type="scientific">Escherichia coli O8 (strain IAI1)</name>
    <dbReference type="NCBI Taxonomy" id="585034"/>
    <lineage>
        <taxon>Bacteria</taxon>
        <taxon>Pseudomonadati</taxon>
        <taxon>Pseudomonadota</taxon>
        <taxon>Gammaproteobacteria</taxon>
        <taxon>Enterobacterales</taxon>
        <taxon>Enterobacteriaceae</taxon>
        <taxon>Escherichia</taxon>
    </lineage>
</organism>
<sequence length="70" mass="7871">MKKDIHPKYEEITASCSCGNVMKIRSTVGHDLNLDVCSKCHPFFTGKQRDVATGGRVDRFNKRFNIPGSK</sequence>
<feature type="chain" id="PRO_1000126616" description="Large ribosomal subunit protein bL31">
    <location>
        <begin position="1"/>
        <end position="70"/>
    </location>
</feature>
<feature type="binding site" evidence="1">
    <location>
        <position position="16"/>
    </location>
    <ligand>
        <name>Zn(2+)</name>
        <dbReference type="ChEBI" id="CHEBI:29105"/>
    </ligand>
</feature>
<feature type="binding site" evidence="1">
    <location>
        <position position="18"/>
    </location>
    <ligand>
        <name>Zn(2+)</name>
        <dbReference type="ChEBI" id="CHEBI:29105"/>
    </ligand>
</feature>
<feature type="binding site" evidence="1">
    <location>
        <position position="37"/>
    </location>
    <ligand>
        <name>Zn(2+)</name>
        <dbReference type="ChEBI" id="CHEBI:29105"/>
    </ligand>
</feature>
<feature type="binding site" evidence="1">
    <location>
        <position position="40"/>
    </location>
    <ligand>
        <name>Zn(2+)</name>
        <dbReference type="ChEBI" id="CHEBI:29105"/>
    </ligand>
</feature>
<feature type="modified residue" description="N6-acetyllysine" evidence="1">
    <location>
        <position position="8"/>
    </location>
</feature>
<reference key="1">
    <citation type="journal article" date="2009" name="PLoS Genet.">
        <title>Organised genome dynamics in the Escherichia coli species results in highly diverse adaptive paths.</title>
        <authorList>
            <person name="Touchon M."/>
            <person name="Hoede C."/>
            <person name="Tenaillon O."/>
            <person name="Barbe V."/>
            <person name="Baeriswyl S."/>
            <person name="Bidet P."/>
            <person name="Bingen E."/>
            <person name="Bonacorsi S."/>
            <person name="Bouchier C."/>
            <person name="Bouvet O."/>
            <person name="Calteau A."/>
            <person name="Chiapello H."/>
            <person name="Clermont O."/>
            <person name="Cruveiller S."/>
            <person name="Danchin A."/>
            <person name="Diard M."/>
            <person name="Dossat C."/>
            <person name="Karoui M.E."/>
            <person name="Frapy E."/>
            <person name="Garry L."/>
            <person name="Ghigo J.M."/>
            <person name="Gilles A.M."/>
            <person name="Johnson J."/>
            <person name="Le Bouguenec C."/>
            <person name="Lescat M."/>
            <person name="Mangenot S."/>
            <person name="Martinez-Jehanne V."/>
            <person name="Matic I."/>
            <person name="Nassif X."/>
            <person name="Oztas S."/>
            <person name="Petit M.A."/>
            <person name="Pichon C."/>
            <person name="Rouy Z."/>
            <person name="Ruf C.S."/>
            <person name="Schneider D."/>
            <person name="Tourret J."/>
            <person name="Vacherie B."/>
            <person name="Vallenet D."/>
            <person name="Medigue C."/>
            <person name="Rocha E.P.C."/>
            <person name="Denamur E."/>
        </authorList>
    </citation>
    <scope>NUCLEOTIDE SEQUENCE [LARGE SCALE GENOMIC DNA]</scope>
    <source>
        <strain>IAI1</strain>
    </source>
</reference>
<proteinExistence type="inferred from homology"/>